<proteinExistence type="inferred from homology"/>
<accession>B8FH11</accession>
<keyword id="KW-0067">ATP-binding</keyword>
<keyword id="KW-0963">Cytoplasm</keyword>
<keyword id="KW-0418">Kinase</keyword>
<keyword id="KW-0460">Magnesium</keyword>
<keyword id="KW-0479">Metal-binding</keyword>
<keyword id="KW-0546">Nucleotide metabolism</keyword>
<keyword id="KW-0547">Nucleotide-binding</keyword>
<keyword id="KW-0597">Phosphoprotein</keyword>
<keyword id="KW-1185">Reference proteome</keyword>
<keyword id="KW-0808">Transferase</keyword>
<reference key="1">
    <citation type="journal article" date="2012" name="Environ. Microbiol.">
        <title>The genome sequence of Desulfatibacillum alkenivorans AK-01: a blueprint for anaerobic alkane oxidation.</title>
        <authorList>
            <person name="Callaghan A.V."/>
            <person name="Morris B.E."/>
            <person name="Pereira I.A."/>
            <person name="McInerney M.J."/>
            <person name="Austin R.N."/>
            <person name="Groves J.T."/>
            <person name="Kukor J.J."/>
            <person name="Suflita J.M."/>
            <person name="Young L.Y."/>
            <person name="Zylstra G.J."/>
            <person name="Wawrik B."/>
        </authorList>
    </citation>
    <scope>NUCLEOTIDE SEQUENCE [LARGE SCALE GENOMIC DNA]</scope>
    <source>
        <strain>AK-01</strain>
    </source>
</reference>
<organism>
    <name type="scientific">Desulfatibacillum aliphaticivorans</name>
    <dbReference type="NCBI Taxonomy" id="218208"/>
    <lineage>
        <taxon>Bacteria</taxon>
        <taxon>Pseudomonadati</taxon>
        <taxon>Thermodesulfobacteriota</taxon>
        <taxon>Desulfobacteria</taxon>
        <taxon>Desulfobacterales</taxon>
        <taxon>Desulfatibacillaceae</taxon>
        <taxon>Desulfatibacillum</taxon>
    </lineage>
</organism>
<protein>
    <recommendedName>
        <fullName evidence="1">Nucleoside diphosphate kinase</fullName>
        <shortName evidence="1">NDK</shortName>
        <shortName evidence="1">NDP kinase</shortName>
        <ecNumber evidence="1">2.7.4.6</ecNumber>
    </recommendedName>
    <alternativeName>
        <fullName evidence="1">Nucleoside-2-P kinase</fullName>
    </alternativeName>
</protein>
<gene>
    <name evidence="1" type="primary">ndk</name>
    <name type="ordered locus">Dalk_0390</name>
</gene>
<evidence type="ECO:0000255" key="1">
    <source>
        <dbReference type="HAMAP-Rule" id="MF_00451"/>
    </source>
</evidence>
<comment type="function">
    <text evidence="1">Major role in the synthesis of nucleoside triphosphates other than ATP. The ATP gamma phosphate is transferred to the NDP beta phosphate via a ping-pong mechanism, using a phosphorylated active-site intermediate.</text>
</comment>
<comment type="catalytic activity">
    <reaction evidence="1">
        <text>a 2'-deoxyribonucleoside 5'-diphosphate + ATP = a 2'-deoxyribonucleoside 5'-triphosphate + ADP</text>
        <dbReference type="Rhea" id="RHEA:44640"/>
        <dbReference type="ChEBI" id="CHEBI:30616"/>
        <dbReference type="ChEBI" id="CHEBI:61560"/>
        <dbReference type="ChEBI" id="CHEBI:73316"/>
        <dbReference type="ChEBI" id="CHEBI:456216"/>
        <dbReference type="EC" id="2.7.4.6"/>
    </reaction>
</comment>
<comment type="catalytic activity">
    <reaction evidence="1">
        <text>a ribonucleoside 5'-diphosphate + ATP = a ribonucleoside 5'-triphosphate + ADP</text>
        <dbReference type="Rhea" id="RHEA:18113"/>
        <dbReference type="ChEBI" id="CHEBI:30616"/>
        <dbReference type="ChEBI" id="CHEBI:57930"/>
        <dbReference type="ChEBI" id="CHEBI:61557"/>
        <dbReference type="ChEBI" id="CHEBI:456216"/>
        <dbReference type="EC" id="2.7.4.6"/>
    </reaction>
</comment>
<comment type="cofactor">
    <cofactor evidence="1">
        <name>Mg(2+)</name>
        <dbReference type="ChEBI" id="CHEBI:18420"/>
    </cofactor>
</comment>
<comment type="subunit">
    <text evidence="1">Homotetramer.</text>
</comment>
<comment type="subcellular location">
    <subcellularLocation>
        <location evidence="1">Cytoplasm</location>
    </subcellularLocation>
</comment>
<comment type="similarity">
    <text evidence="1">Belongs to the NDK family.</text>
</comment>
<sequence>MEKTLSIIKPDAVERNLIGNIVKRFEDAGIKIVAMKLLKLSKAQAEAFYAVHKERPFYGELTDYMSSGPCVPMILEGEGVILKNREIMGATDPKEAAAGTIRADLAIDKEKNSVHGSDAPETAAQEIAFFFTEYELAG</sequence>
<feature type="chain" id="PRO_1000135249" description="Nucleoside diphosphate kinase">
    <location>
        <begin position="1"/>
        <end position="138"/>
    </location>
</feature>
<feature type="active site" description="Pros-phosphohistidine intermediate" evidence="1">
    <location>
        <position position="115"/>
    </location>
</feature>
<feature type="binding site" evidence="1">
    <location>
        <position position="9"/>
    </location>
    <ligand>
        <name>ATP</name>
        <dbReference type="ChEBI" id="CHEBI:30616"/>
    </ligand>
</feature>
<feature type="binding site" evidence="1">
    <location>
        <position position="57"/>
    </location>
    <ligand>
        <name>ATP</name>
        <dbReference type="ChEBI" id="CHEBI:30616"/>
    </ligand>
</feature>
<feature type="binding site" evidence="1">
    <location>
        <position position="85"/>
    </location>
    <ligand>
        <name>ATP</name>
        <dbReference type="ChEBI" id="CHEBI:30616"/>
    </ligand>
</feature>
<feature type="binding site" evidence="1">
    <location>
        <position position="91"/>
    </location>
    <ligand>
        <name>ATP</name>
        <dbReference type="ChEBI" id="CHEBI:30616"/>
    </ligand>
</feature>
<feature type="binding site" evidence="1">
    <location>
        <position position="102"/>
    </location>
    <ligand>
        <name>ATP</name>
        <dbReference type="ChEBI" id="CHEBI:30616"/>
    </ligand>
</feature>
<feature type="binding site" evidence="1">
    <location>
        <position position="112"/>
    </location>
    <ligand>
        <name>ATP</name>
        <dbReference type="ChEBI" id="CHEBI:30616"/>
    </ligand>
</feature>
<name>NDK_DESAL</name>
<dbReference type="EC" id="2.7.4.6" evidence="1"/>
<dbReference type="EMBL" id="CP001322">
    <property type="protein sequence ID" value="ACL02099.1"/>
    <property type="molecule type" value="Genomic_DNA"/>
</dbReference>
<dbReference type="RefSeq" id="WP_012609539.1">
    <property type="nucleotide sequence ID" value="NC_011768.1"/>
</dbReference>
<dbReference type="SMR" id="B8FH11"/>
<dbReference type="KEGG" id="dal:Dalk_0390"/>
<dbReference type="eggNOG" id="COG0105">
    <property type="taxonomic scope" value="Bacteria"/>
</dbReference>
<dbReference type="HOGENOM" id="CLU_060216_8_1_7"/>
<dbReference type="Proteomes" id="UP000000739">
    <property type="component" value="Chromosome"/>
</dbReference>
<dbReference type="GO" id="GO:0005737">
    <property type="term" value="C:cytoplasm"/>
    <property type="evidence" value="ECO:0007669"/>
    <property type="project" value="UniProtKB-SubCell"/>
</dbReference>
<dbReference type="GO" id="GO:0005524">
    <property type="term" value="F:ATP binding"/>
    <property type="evidence" value="ECO:0007669"/>
    <property type="project" value="UniProtKB-UniRule"/>
</dbReference>
<dbReference type="GO" id="GO:0046872">
    <property type="term" value="F:metal ion binding"/>
    <property type="evidence" value="ECO:0007669"/>
    <property type="project" value="UniProtKB-KW"/>
</dbReference>
<dbReference type="GO" id="GO:0004550">
    <property type="term" value="F:nucleoside diphosphate kinase activity"/>
    <property type="evidence" value="ECO:0007669"/>
    <property type="project" value="UniProtKB-UniRule"/>
</dbReference>
<dbReference type="GO" id="GO:0006241">
    <property type="term" value="P:CTP biosynthetic process"/>
    <property type="evidence" value="ECO:0007669"/>
    <property type="project" value="UniProtKB-UniRule"/>
</dbReference>
<dbReference type="GO" id="GO:0006183">
    <property type="term" value="P:GTP biosynthetic process"/>
    <property type="evidence" value="ECO:0007669"/>
    <property type="project" value="UniProtKB-UniRule"/>
</dbReference>
<dbReference type="GO" id="GO:0006228">
    <property type="term" value="P:UTP biosynthetic process"/>
    <property type="evidence" value="ECO:0007669"/>
    <property type="project" value="UniProtKB-UniRule"/>
</dbReference>
<dbReference type="CDD" id="cd04413">
    <property type="entry name" value="NDPk_I"/>
    <property type="match status" value="1"/>
</dbReference>
<dbReference type="FunFam" id="3.30.70.141:FF:000003">
    <property type="entry name" value="Nucleoside diphosphate kinase"/>
    <property type="match status" value="1"/>
</dbReference>
<dbReference type="Gene3D" id="3.30.70.141">
    <property type="entry name" value="Nucleoside diphosphate kinase-like domain"/>
    <property type="match status" value="1"/>
</dbReference>
<dbReference type="HAMAP" id="MF_00451">
    <property type="entry name" value="NDP_kinase"/>
    <property type="match status" value="1"/>
</dbReference>
<dbReference type="InterPro" id="IPR034907">
    <property type="entry name" value="NDK-like_dom"/>
</dbReference>
<dbReference type="InterPro" id="IPR036850">
    <property type="entry name" value="NDK-like_dom_sf"/>
</dbReference>
<dbReference type="InterPro" id="IPR001564">
    <property type="entry name" value="Nucleoside_diP_kinase"/>
</dbReference>
<dbReference type="InterPro" id="IPR023005">
    <property type="entry name" value="Nucleoside_diP_kinase_AS"/>
</dbReference>
<dbReference type="NCBIfam" id="NF001908">
    <property type="entry name" value="PRK00668.1"/>
    <property type="match status" value="1"/>
</dbReference>
<dbReference type="PANTHER" id="PTHR11349">
    <property type="entry name" value="NUCLEOSIDE DIPHOSPHATE KINASE"/>
    <property type="match status" value="1"/>
</dbReference>
<dbReference type="Pfam" id="PF00334">
    <property type="entry name" value="NDK"/>
    <property type="match status" value="1"/>
</dbReference>
<dbReference type="PRINTS" id="PR01243">
    <property type="entry name" value="NUCDPKINASE"/>
</dbReference>
<dbReference type="SMART" id="SM00562">
    <property type="entry name" value="NDK"/>
    <property type="match status" value="1"/>
</dbReference>
<dbReference type="SUPFAM" id="SSF54919">
    <property type="entry name" value="Nucleoside diphosphate kinase, NDK"/>
    <property type="match status" value="1"/>
</dbReference>
<dbReference type="PROSITE" id="PS00469">
    <property type="entry name" value="NDPK"/>
    <property type="match status" value="1"/>
</dbReference>
<dbReference type="PROSITE" id="PS51374">
    <property type="entry name" value="NDPK_LIKE"/>
    <property type="match status" value="1"/>
</dbReference>